<evidence type="ECO:0000255" key="1">
    <source>
        <dbReference type="HAMAP-Rule" id="MF_01310"/>
    </source>
</evidence>
<evidence type="ECO:0000256" key="2">
    <source>
        <dbReference type="SAM" id="MobiDB-lite"/>
    </source>
</evidence>
<evidence type="ECO:0000305" key="3"/>
<dbReference type="EMBL" id="CP001618">
    <property type="protein sequence ID" value="ACQ81358.1"/>
    <property type="molecule type" value="Genomic_DNA"/>
</dbReference>
<dbReference type="RefSeq" id="WP_015883598.1">
    <property type="nucleotide sequence ID" value="NC_012669.1"/>
</dbReference>
<dbReference type="SMR" id="C5C0G2"/>
<dbReference type="STRING" id="471853.Bcav_3114"/>
<dbReference type="KEGG" id="bcv:Bcav_3114"/>
<dbReference type="eggNOG" id="COG0100">
    <property type="taxonomic scope" value="Bacteria"/>
</dbReference>
<dbReference type="HOGENOM" id="CLU_072439_5_0_11"/>
<dbReference type="OrthoDB" id="9806415at2"/>
<dbReference type="Proteomes" id="UP000007962">
    <property type="component" value="Chromosome"/>
</dbReference>
<dbReference type="GO" id="GO:1990904">
    <property type="term" value="C:ribonucleoprotein complex"/>
    <property type="evidence" value="ECO:0007669"/>
    <property type="project" value="UniProtKB-KW"/>
</dbReference>
<dbReference type="GO" id="GO:0005840">
    <property type="term" value="C:ribosome"/>
    <property type="evidence" value="ECO:0007669"/>
    <property type="project" value="UniProtKB-KW"/>
</dbReference>
<dbReference type="GO" id="GO:0019843">
    <property type="term" value="F:rRNA binding"/>
    <property type="evidence" value="ECO:0007669"/>
    <property type="project" value="UniProtKB-UniRule"/>
</dbReference>
<dbReference type="GO" id="GO:0003735">
    <property type="term" value="F:structural constituent of ribosome"/>
    <property type="evidence" value="ECO:0007669"/>
    <property type="project" value="InterPro"/>
</dbReference>
<dbReference type="GO" id="GO:0006412">
    <property type="term" value="P:translation"/>
    <property type="evidence" value="ECO:0007669"/>
    <property type="project" value="UniProtKB-UniRule"/>
</dbReference>
<dbReference type="FunFam" id="3.30.420.80:FF:000001">
    <property type="entry name" value="30S ribosomal protein S11"/>
    <property type="match status" value="1"/>
</dbReference>
<dbReference type="Gene3D" id="3.30.420.80">
    <property type="entry name" value="Ribosomal protein S11"/>
    <property type="match status" value="1"/>
</dbReference>
<dbReference type="HAMAP" id="MF_01310">
    <property type="entry name" value="Ribosomal_uS11"/>
    <property type="match status" value="1"/>
</dbReference>
<dbReference type="InterPro" id="IPR001971">
    <property type="entry name" value="Ribosomal_uS11"/>
</dbReference>
<dbReference type="InterPro" id="IPR019981">
    <property type="entry name" value="Ribosomal_uS11_bac-type"/>
</dbReference>
<dbReference type="InterPro" id="IPR018102">
    <property type="entry name" value="Ribosomal_uS11_CS"/>
</dbReference>
<dbReference type="InterPro" id="IPR036967">
    <property type="entry name" value="Ribosomal_uS11_sf"/>
</dbReference>
<dbReference type="NCBIfam" id="NF003698">
    <property type="entry name" value="PRK05309.1"/>
    <property type="match status" value="1"/>
</dbReference>
<dbReference type="NCBIfam" id="TIGR03632">
    <property type="entry name" value="uS11_bact"/>
    <property type="match status" value="1"/>
</dbReference>
<dbReference type="PANTHER" id="PTHR11759">
    <property type="entry name" value="40S RIBOSOMAL PROTEIN S14/30S RIBOSOMAL PROTEIN S11"/>
    <property type="match status" value="1"/>
</dbReference>
<dbReference type="Pfam" id="PF00411">
    <property type="entry name" value="Ribosomal_S11"/>
    <property type="match status" value="1"/>
</dbReference>
<dbReference type="PIRSF" id="PIRSF002131">
    <property type="entry name" value="Ribosomal_S11"/>
    <property type="match status" value="1"/>
</dbReference>
<dbReference type="SUPFAM" id="SSF53137">
    <property type="entry name" value="Translational machinery components"/>
    <property type="match status" value="1"/>
</dbReference>
<dbReference type="PROSITE" id="PS00054">
    <property type="entry name" value="RIBOSOMAL_S11"/>
    <property type="match status" value="1"/>
</dbReference>
<feature type="chain" id="PRO_1000214354" description="Small ribosomal subunit protein uS11">
    <location>
        <begin position="1"/>
        <end position="135"/>
    </location>
</feature>
<feature type="region of interest" description="Disordered" evidence="2">
    <location>
        <begin position="1"/>
        <end position="26"/>
    </location>
</feature>
<feature type="compositionally biased region" description="Basic residues" evidence="2">
    <location>
        <begin position="12"/>
        <end position="23"/>
    </location>
</feature>
<keyword id="KW-1185">Reference proteome</keyword>
<keyword id="KW-0687">Ribonucleoprotein</keyword>
<keyword id="KW-0689">Ribosomal protein</keyword>
<keyword id="KW-0694">RNA-binding</keyword>
<keyword id="KW-0699">rRNA-binding</keyword>
<comment type="function">
    <text evidence="1">Located on the platform of the 30S subunit, it bridges several disparate RNA helices of the 16S rRNA. Forms part of the Shine-Dalgarno cleft in the 70S ribosome.</text>
</comment>
<comment type="subunit">
    <text evidence="1">Part of the 30S ribosomal subunit. Interacts with proteins S7 and S18. Binds to IF-3.</text>
</comment>
<comment type="similarity">
    <text evidence="1">Belongs to the universal ribosomal protein uS11 family.</text>
</comment>
<proteinExistence type="inferred from homology"/>
<name>RS11_BEUC1</name>
<accession>C5C0G2</accession>
<protein>
    <recommendedName>
        <fullName evidence="1">Small ribosomal subunit protein uS11</fullName>
    </recommendedName>
    <alternativeName>
        <fullName evidence="3">30S ribosomal protein S11</fullName>
    </alternativeName>
</protein>
<organism>
    <name type="scientific">Beutenbergia cavernae (strain ATCC BAA-8 / DSM 12333 / CCUG 43141 / JCM 11478 / NBRC 16432 / NCIMB 13614 / HKI 0122)</name>
    <dbReference type="NCBI Taxonomy" id="471853"/>
    <lineage>
        <taxon>Bacteria</taxon>
        <taxon>Bacillati</taxon>
        <taxon>Actinomycetota</taxon>
        <taxon>Actinomycetes</taxon>
        <taxon>Micrococcales</taxon>
        <taxon>Beutenbergiaceae</taxon>
        <taxon>Beutenbergia</taxon>
    </lineage>
</organism>
<sequence>MPPKSRTAGGARKTRRKEKKNVSHGHAYIKSTFNNTIVSITDPSGAVIAWASSGQVGFKGSRKSTPFAAQLAAEAAARRAQEHGMKKVDVFVKGPGSGRETAIRSLQATGLEVGSISDVTPQAHNGVRPPKRRRV</sequence>
<gene>
    <name evidence="1" type="primary">rpsK</name>
    <name type="ordered locus">Bcav_3114</name>
</gene>
<reference key="1">
    <citation type="journal article" date="2009" name="Stand. Genomic Sci.">
        <title>Complete genome sequence of Beutenbergia cavernae type strain (HKI 0122).</title>
        <authorList>
            <person name="Land M."/>
            <person name="Pukall R."/>
            <person name="Abt B."/>
            <person name="Goker M."/>
            <person name="Rohde M."/>
            <person name="Glavina Del Rio T."/>
            <person name="Tice H."/>
            <person name="Copeland A."/>
            <person name="Cheng J.F."/>
            <person name="Lucas S."/>
            <person name="Chen F."/>
            <person name="Nolan M."/>
            <person name="Bruce D."/>
            <person name="Goodwin L."/>
            <person name="Pitluck S."/>
            <person name="Ivanova N."/>
            <person name="Mavromatis K."/>
            <person name="Ovchinnikova G."/>
            <person name="Pati A."/>
            <person name="Chen A."/>
            <person name="Palaniappan K."/>
            <person name="Hauser L."/>
            <person name="Chang Y.J."/>
            <person name="Jefferies C.C."/>
            <person name="Saunders E."/>
            <person name="Brettin T."/>
            <person name="Detter J.C."/>
            <person name="Han C."/>
            <person name="Chain P."/>
            <person name="Bristow J."/>
            <person name="Eisen J.A."/>
            <person name="Markowitz V."/>
            <person name="Hugenholtz P."/>
            <person name="Kyrpides N.C."/>
            <person name="Klenk H.P."/>
            <person name="Lapidus A."/>
        </authorList>
    </citation>
    <scope>NUCLEOTIDE SEQUENCE [LARGE SCALE GENOMIC DNA]</scope>
    <source>
        <strain>ATCC BAA-8 / DSM 12333 / CCUG 43141 / JCM 11478 / NBRC 16432 / NCIMB 13614 / HKI 0122</strain>
    </source>
</reference>